<accession>Q88D04</accession>
<comment type="function">
    <text evidence="1">Involved in the biosynthesis of osmoregulated periplasmic glucans (OPGs).</text>
</comment>
<comment type="pathway">
    <text evidence="1">Glycan metabolism; osmoregulated periplasmic glucan (OPG) biosynthesis.</text>
</comment>
<comment type="subcellular location">
    <subcellularLocation>
        <location evidence="1">Cell inner membrane</location>
        <topology evidence="1">Multi-pass membrane protein</topology>
    </subcellularLocation>
</comment>
<comment type="similarity">
    <text evidence="1">Belongs to the glycosyltransferase 2 family. OpgH subfamily.</text>
</comment>
<sequence>MSNSSARPESLGEYLAHLPLSDEQRAELASCTSFSELHQRLAANPAASSAEAVQASVGPRLTVGSAAELEEAEMLGVDGSGRLCLKIAPPIKRTKVVPEPWRTNVLIRMWRRMTGRPNAPQPPKRELPPARWRTVGSIRRYILLALMIGQTIVAGWYMKGILPYQGWSFVDFDEIVNQPLWDTVVQVWPYALQTSILILFGILFCWVSAGFWTALMGFLELLTGRDKYKISGSSAGNEPIAPEARTALVMPICNEDVPRVFAGLRATFESVAASGNLDRFDFFVLSDTNDTDIAVAEQQAWLDVCRETKGFGRIFYRRRRRRVKRKSGNLDDFCRRWGGEYKYMVVLDADSVMSGECLSSLVRLMEANPDAGIIQTGPKASGMDTLYARMQQFATRVYGPLFTAGLHFWQLGESHYWGHNAIIRMKPFIEHCALAPLPGKGAFAGAILSHDFVEAALMRRAGWGVWIAYDLPGSYEELPPNLLDELKRDRRWCHGNLMNFRLFLVKGMHPVHRAVFLTGVMSYLSAPLWFLFLVLSTALLATNTLMEPQYFIEPYQLYPLWPQWHPEKAVALFSTTIVLLFLPKLLSVILIWAKGAVEYGGRVKVTLSMLMEMLFSMLLAPVRMIFHTRFVLAAFLGWAATWNSPQRDDDSTPWGEAVRRHGPQTLLGIAWAALVAWLNPSFLWWLAPIVGSLVLSIPVSVISSRTRLGLAAKDEKLFLIPEEYATPQELLATDQYTHENRWHALHDGFVRAVVDPRQNALACAMATARHGQAAPIEALRAERVAKAIEVGPKGLDLNTRLALLSDPVALSRLHEQVWAEHNAAWIDVWRASINNDPHSPLLPLHPENAGQPSLVGA</sequence>
<gene>
    <name evidence="1" type="primary">opgH</name>
    <name type="synonym">mdoH</name>
    <name type="ordered locus">PP_5025</name>
</gene>
<organism>
    <name type="scientific">Pseudomonas putida (strain ATCC 47054 / DSM 6125 / CFBP 8728 / NCIMB 11950 / KT2440)</name>
    <dbReference type="NCBI Taxonomy" id="160488"/>
    <lineage>
        <taxon>Bacteria</taxon>
        <taxon>Pseudomonadati</taxon>
        <taxon>Pseudomonadota</taxon>
        <taxon>Gammaproteobacteria</taxon>
        <taxon>Pseudomonadales</taxon>
        <taxon>Pseudomonadaceae</taxon>
        <taxon>Pseudomonas</taxon>
    </lineage>
</organism>
<dbReference type="EC" id="2.4.1.-" evidence="1"/>
<dbReference type="EMBL" id="AE015451">
    <property type="protein sequence ID" value="AAN70590.1"/>
    <property type="molecule type" value="Genomic_DNA"/>
</dbReference>
<dbReference type="RefSeq" id="NP_747126.1">
    <property type="nucleotide sequence ID" value="NC_002947.4"/>
</dbReference>
<dbReference type="RefSeq" id="WP_010955584.1">
    <property type="nucleotide sequence ID" value="NZ_CP169744.1"/>
</dbReference>
<dbReference type="STRING" id="160488.PP_5025"/>
<dbReference type="CAZy" id="GT2">
    <property type="family name" value="Glycosyltransferase Family 2"/>
</dbReference>
<dbReference type="PaxDb" id="160488-PP_5025"/>
<dbReference type="GeneID" id="83682759"/>
<dbReference type="KEGG" id="ppu:PP_5025"/>
<dbReference type="PATRIC" id="fig|160488.4.peg.5366"/>
<dbReference type="eggNOG" id="COG2943">
    <property type="taxonomic scope" value="Bacteria"/>
</dbReference>
<dbReference type="HOGENOM" id="CLU_015730_1_0_6"/>
<dbReference type="OrthoDB" id="9775281at2"/>
<dbReference type="PhylomeDB" id="Q88D04"/>
<dbReference type="BioCyc" id="PPUT160488:G1G01-5370-MONOMER"/>
<dbReference type="UniPathway" id="UPA00637"/>
<dbReference type="Proteomes" id="UP000000556">
    <property type="component" value="Chromosome"/>
</dbReference>
<dbReference type="GO" id="GO:0005886">
    <property type="term" value="C:plasma membrane"/>
    <property type="evidence" value="ECO:0007669"/>
    <property type="project" value="UniProtKB-SubCell"/>
</dbReference>
<dbReference type="GO" id="GO:0016758">
    <property type="term" value="F:hexosyltransferase activity"/>
    <property type="evidence" value="ECO:0007669"/>
    <property type="project" value="UniProtKB-UniRule"/>
</dbReference>
<dbReference type="GO" id="GO:0009250">
    <property type="term" value="P:glucan biosynthetic process"/>
    <property type="evidence" value="ECO:0007669"/>
    <property type="project" value="UniProtKB-UniRule"/>
</dbReference>
<dbReference type="CDD" id="cd04191">
    <property type="entry name" value="Glucan_BSP_MdoH"/>
    <property type="match status" value="1"/>
</dbReference>
<dbReference type="FunFam" id="3.90.550.10:FF:000047">
    <property type="entry name" value="Glucans biosynthesis glucosyltransferase H"/>
    <property type="match status" value="1"/>
</dbReference>
<dbReference type="Gene3D" id="3.90.550.10">
    <property type="entry name" value="Spore Coat Polysaccharide Biosynthesis Protein SpsA, Chain A"/>
    <property type="match status" value="1"/>
</dbReference>
<dbReference type="HAMAP" id="MF_01072">
    <property type="entry name" value="MdoH_OpgH"/>
    <property type="match status" value="1"/>
</dbReference>
<dbReference type="InterPro" id="IPR023725">
    <property type="entry name" value="Glucans_biosynth_gluTrFase_H"/>
</dbReference>
<dbReference type="InterPro" id="IPR001173">
    <property type="entry name" value="Glyco_trans_2-like"/>
</dbReference>
<dbReference type="InterPro" id="IPR050321">
    <property type="entry name" value="Glycosyltr_2/OpgH_subfam"/>
</dbReference>
<dbReference type="InterPro" id="IPR029044">
    <property type="entry name" value="Nucleotide-diphossugar_trans"/>
</dbReference>
<dbReference type="NCBIfam" id="NF003955">
    <property type="entry name" value="PRK05454.1-1"/>
    <property type="match status" value="1"/>
</dbReference>
<dbReference type="NCBIfam" id="NF003958">
    <property type="entry name" value="PRK05454.2-1"/>
    <property type="match status" value="1"/>
</dbReference>
<dbReference type="NCBIfam" id="NF003962">
    <property type="entry name" value="PRK05454.2-5"/>
    <property type="match status" value="1"/>
</dbReference>
<dbReference type="PANTHER" id="PTHR43867">
    <property type="entry name" value="CELLULOSE SYNTHASE CATALYTIC SUBUNIT A [UDP-FORMING]"/>
    <property type="match status" value="1"/>
</dbReference>
<dbReference type="PANTHER" id="PTHR43867:SF5">
    <property type="entry name" value="GLUCANS BIOSYNTHESIS GLUCOSYLTRANSFERASE H"/>
    <property type="match status" value="1"/>
</dbReference>
<dbReference type="Pfam" id="PF00535">
    <property type="entry name" value="Glycos_transf_2"/>
    <property type="match status" value="1"/>
</dbReference>
<dbReference type="SUPFAM" id="SSF53448">
    <property type="entry name" value="Nucleotide-diphospho-sugar transferases"/>
    <property type="match status" value="1"/>
</dbReference>
<proteinExistence type="inferred from homology"/>
<name>OPGH_PSEPK</name>
<evidence type="ECO:0000255" key="1">
    <source>
        <dbReference type="HAMAP-Rule" id="MF_01072"/>
    </source>
</evidence>
<reference key="1">
    <citation type="journal article" date="2002" name="Environ. Microbiol.">
        <title>Complete genome sequence and comparative analysis of the metabolically versatile Pseudomonas putida KT2440.</title>
        <authorList>
            <person name="Nelson K.E."/>
            <person name="Weinel C."/>
            <person name="Paulsen I.T."/>
            <person name="Dodson R.J."/>
            <person name="Hilbert H."/>
            <person name="Martins dos Santos V.A.P."/>
            <person name="Fouts D.E."/>
            <person name="Gill S.R."/>
            <person name="Pop M."/>
            <person name="Holmes M."/>
            <person name="Brinkac L.M."/>
            <person name="Beanan M.J."/>
            <person name="DeBoy R.T."/>
            <person name="Daugherty S.C."/>
            <person name="Kolonay J.F."/>
            <person name="Madupu R."/>
            <person name="Nelson W.C."/>
            <person name="White O."/>
            <person name="Peterson J.D."/>
            <person name="Khouri H.M."/>
            <person name="Hance I."/>
            <person name="Chris Lee P."/>
            <person name="Holtzapple E.K."/>
            <person name="Scanlan D."/>
            <person name="Tran K."/>
            <person name="Moazzez A."/>
            <person name="Utterback T.R."/>
            <person name="Rizzo M."/>
            <person name="Lee K."/>
            <person name="Kosack D."/>
            <person name="Moestl D."/>
            <person name="Wedler H."/>
            <person name="Lauber J."/>
            <person name="Stjepandic D."/>
            <person name="Hoheisel J."/>
            <person name="Straetz M."/>
            <person name="Heim S."/>
            <person name="Kiewitz C."/>
            <person name="Eisen J.A."/>
            <person name="Timmis K.N."/>
            <person name="Duesterhoeft A."/>
            <person name="Tuemmler B."/>
            <person name="Fraser C.M."/>
        </authorList>
    </citation>
    <scope>NUCLEOTIDE SEQUENCE [LARGE SCALE GENOMIC DNA]</scope>
    <source>
        <strain>ATCC 47054 / DSM 6125 / CFBP 8728 / NCIMB 11950 / KT2440</strain>
    </source>
</reference>
<protein>
    <recommendedName>
        <fullName evidence="1">Glucans biosynthesis glucosyltransferase H</fullName>
        <ecNumber evidence="1">2.4.1.-</ecNumber>
    </recommendedName>
</protein>
<keyword id="KW-0997">Cell inner membrane</keyword>
<keyword id="KW-1003">Cell membrane</keyword>
<keyword id="KW-0328">Glycosyltransferase</keyword>
<keyword id="KW-0472">Membrane</keyword>
<keyword id="KW-1185">Reference proteome</keyword>
<keyword id="KW-0808">Transferase</keyword>
<keyword id="KW-0812">Transmembrane</keyword>
<keyword id="KW-1133">Transmembrane helix</keyword>
<feature type="chain" id="PRO_0000210355" description="Glucans biosynthesis glucosyltransferase H">
    <location>
        <begin position="1"/>
        <end position="857"/>
    </location>
</feature>
<feature type="transmembrane region" description="Helical" evidence="1">
    <location>
        <begin position="141"/>
        <end position="158"/>
    </location>
</feature>
<feature type="transmembrane region" description="Helical" evidence="1">
    <location>
        <begin position="197"/>
        <end position="219"/>
    </location>
</feature>
<feature type="transmembrane region" description="Helical" evidence="1">
    <location>
        <begin position="514"/>
        <end position="536"/>
    </location>
</feature>
<feature type="transmembrane region" description="Helical" evidence="1">
    <location>
        <begin position="570"/>
        <end position="592"/>
    </location>
</feature>
<feature type="transmembrane region" description="Helical" evidence="1">
    <location>
        <begin position="605"/>
        <end position="627"/>
    </location>
</feature>
<feature type="transmembrane region" description="Helical" evidence="1">
    <location>
        <begin position="681"/>
        <end position="703"/>
    </location>
</feature>